<proteinExistence type="inferred from homology"/>
<organism>
    <name type="scientific">Shigella boydii serotype 18 (strain CDC 3083-94 / BS512)</name>
    <dbReference type="NCBI Taxonomy" id="344609"/>
    <lineage>
        <taxon>Bacteria</taxon>
        <taxon>Pseudomonadati</taxon>
        <taxon>Pseudomonadota</taxon>
        <taxon>Gammaproteobacteria</taxon>
        <taxon>Enterobacterales</taxon>
        <taxon>Enterobacteriaceae</taxon>
        <taxon>Shigella</taxon>
    </lineage>
</organism>
<accession>B2U1G7</accession>
<reference key="1">
    <citation type="submission" date="2008-05" db="EMBL/GenBank/DDBJ databases">
        <title>Complete sequence of Shigella boydii serotype 18 strain BS512.</title>
        <authorList>
            <person name="Rasko D.A."/>
            <person name="Rosovitz M."/>
            <person name="Maurelli A.T."/>
            <person name="Myers G."/>
            <person name="Seshadri R."/>
            <person name="Cer R."/>
            <person name="Jiang L."/>
            <person name="Ravel J."/>
            <person name="Sebastian Y."/>
        </authorList>
    </citation>
    <scope>NUCLEOTIDE SEQUENCE [LARGE SCALE GENOMIC DNA]</scope>
    <source>
        <strain>CDC 3083-94 / BS512</strain>
    </source>
</reference>
<gene>
    <name evidence="1" type="primary">tsaD</name>
    <name type="synonym">gcp</name>
    <name type="ordered locus">SbBS512_E3498</name>
</gene>
<protein>
    <recommendedName>
        <fullName evidence="1">tRNA N6-adenosine threonylcarbamoyltransferase</fullName>
        <ecNumber evidence="1">2.3.1.234</ecNumber>
    </recommendedName>
    <alternativeName>
        <fullName evidence="1">N6-L-threonylcarbamoyladenine synthase</fullName>
        <shortName evidence="1">t(6)A synthase</shortName>
    </alternativeName>
    <alternativeName>
        <fullName evidence="1">t(6)A37 threonylcarbamoyladenosine biosynthesis protein TsaD</fullName>
    </alternativeName>
    <alternativeName>
        <fullName evidence="1">tRNA threonylcarbamoyladenosine biosynthesis protein TsaD</fullName>
    </alternativeName>
</protein>
<dbReference type="EC" id="2.3.1.234" evidence="1"/>
<dbReference type="EMBL" id="CP001063">
    <property type="protein sequence ID" value="ACD07618.1"/>
    <property type="molecule type" value="Genomic_DNA"/>
</dbReference>
<dbReference type="RefSeq" id="WP_001264365.1">
    <property type="nucleotide sequence ID" value="NC_010658.1"/>
</dbReference>
<dbReference type="SMR" id="B2U1G7"/>
<dbReference type="STRING" id="344609.SbBS512_E3498"/>
<dbReference type="GeneID" id="93778929"/>
<dbReference type="KEGG" id="sbc:SbBS512_E3498"/>
<dbReference type="HOGENOM" id="CLU_023208_0_2_6"/>
<dbReference type="Proteomes" id="UP000001030">
    <property type="component" value="Chromosome"/>
</dbReference>
<dbReference type="GO" id="GO:0005737">
    <property type="term" value="C:cytoplasm"/>
    <property type="evidence" value="ECO:0007669"/>
    <property type="project" value="UniProtKB-SubCell"/>
</dbReference>
<dbReference type="GO" id="GO:0005506">
    <property type="term" value="F:iron ion binding"/>
    <property type="evidence" value="ECO:0007669"/>
    <property type="project" value="UniProtKB-UniRule"/>
</dbReference>
<dbReference type="GO" id="GO:0061711">
    <property type="term" value="F:N(6)-L-threonylcarbamoyladenine synthase activity"/>
    <property type="evidence" value="ECO:0007669"/>
    <property type="project" value="UniProtKB-EC"/>
</dbReference>
<dbReference type="GO" id="GO:0002949">
    <property type="term" value="P:tRNA threonylcarbamoyladenosine modification"/>
    <property type="evidence" value="ECO:0007669"/>
    <property type="project" value="UniProtKB-UniRule"/>
</dbReference>
<dbReference type="CDD" id="cd24097">
    <property type="entry name" value="ASKHA_NBD_TsaD-like"/>
    <property type="match status" value="1"/>
</dbReference>
<dbReference type="FunFam" id="3.30.420.40:FF:000031">
    <property type="entry name" value="tRNA N6-adenosine threonylcarbamoyltransferase"/>
    <property type="match status" value="1"/>
</dbReference>
<dbReference type="Gene3D" id="3.30.420.40">
    <property type="match status" value="2"/>
</dbReference>
<dbReference type="HAMAP" id="MF_01445">
    <property type="entry name" value="TsaD"/>
    <property type="match status" value="1"/>
</dbReference>
<dbReference type="InterPro" id="IPR043129">
    <property type="entry name" value="ATPase_NBD"/>
</dbReference>
<dbReference type="InterPro" id="IPR000905">
    <property type="entry name" value="Gcp-like_dom"/>
</dbReference>
<dbReference type="InterPro" id="IPR017861">
    <property type="entry name" value="KAE1/TsaD"/>
</dbReference>
<dbReference type="InterPro" id="IPR017860">
    <property type="entry name" value="Peptidase_M22_CS"/>
</dbReference>
<dbReference type="InterPro" id="IPR022450">
    <property type="entry name" value="TsaD"/>
</dbReference>
<dbReference type="NCBIfam" id="TIGR00329">
    <property type="entry name" value="gcp_kae1"/>
    <property type="match status" value="1"/>
</dbReference>
<dbReference type="NCBIfam" id="TIGR03723">
    <property type="entry name" value="T6A_TsaD_YgjD"/>
    <property type="match status" value="1"/>
</dbReference>
<dbReference type="PANTHER" id="PTHR11735">
    <property type="entry name" value="TRNA N6-ADENOSINE THREONYLCARBAMOYLTRANSFERASE"/>
    <property type="match status" value="1"/>
</dbReference>
<dbReference type="PANTHER" id="PTHR11735:SF6">
    <property type="entry name" value="TRNA N6-ADENOSINE THREONYLCARBAMOYLTRANSFERASE, MITOCHONDRIAL"/>
    <property type="match status" value="1"/>
</dbReference>
<dbReference type="Pfam" id="PF00814">
    <property type="entry name" value="TsaD"/>
    <property type="match status" value="1"/>
</dbReference>
<dbReference type="PRINTS" id="PR00789">
    <property type="entry name" value="OSIALOPTASE"/>
</dbReference>
<dbReference type="SUPFAM" id="SSF53067">
    <property type="entry name" value="Actin-like ATPase domain"/>
    <property type="match status" value="1"/>
</dbReference>
<dbReference type="PROSITE" id="PS01016">
    <property type="entry name" value="GLYCOPROTEASE"/>
    <property type="match status" value="1"/>
</dbReference>
<comment type="function">
    <text evidence="1">Required for the formation of a threonylcarbamoyl group on adenosine at position 37 (t(6)A37) in tRNAs that read codons beginning with adenine. Is involved in the transfer of the threonylcarbamoyl moiety of threonylcarbamoyl-AMP (TC-AMP) to the N6 group of A37, together with TsaE and TsaB. TsaD likely plays a direct catalytic role in this reaction.</text>
</comment>
<comment type="catalytic activity">
    <reaction evidence="1">
        <text>L-threonylcarbamoyladenylate + adenosine(37) in tRNA = N(6)-L-threonylcarbamoyladenosine(37) in tRNA + AMP + H(+)</text>
        <dbReference type="Rhea" id="RHEA:37059"/>
        <dbReference type="Rhea" id="RHEA-COMP:10162"/>
        <dbReference type="Rhea" id="RHEA-COMP:10163"/>
        <dbReference type="ChEBI" id="CHEBI:15378"/>
        <dbReference type="ChEBI" id="CHEBI:73682"/>
        <dbReference type="ChEBI" id="CHEBI:74411"/>
        <dbReference type="ChEBI" id="CHEBI:74418"/>
        <dbReference type="ChEBI" id="CHEBI:456215"/>
        <dbReference type="EC" id="2.3.1.234"/>
    </reaction>
</comment>
<comment type="cofactor">
    <cofactor evidence="1">
        <name>Fe(2+)</name>
        <dbReference type="ChEBI" id="CHEBI:29033"/>
    </cofactor>
    <text evidence="1">Binds 1 Fe(2+) ion per subunit.</text>
</comment>
<comment type="subcellular location">
    <subcellularLocation>
        <location evidence="1">Cytoplasm</location>
    </subcellularLocation>
</comment>
<comment type="similarity">
    <text evidence="1">Belongs to the KAE1 / TsaD family.</text>
</comment>
<keyword id="KW-0012">Acyltransferase</keyword>
<keyword id="KW-0963">Cytoplasm</keyword>
<keyword id="KW-0408">Iron</keyword>
<keyword id="KW-0479">Metal-binding</keyword>
<keyword id="KW-1185">Reference proteome</keyword>
<keyword id="KW-0808">Transferase</keyword>
<keyword id="KW-0819">tRNA processing</keyword>
<evidence type="ECO:0000255" key="1">
    <source>
        <dbReference type="HAMAP-Rule" id="MF_01445"/>
    </source>
</evidence>
<feature type="chain" id="PRO_1000146024" description="tRNA N6-adenosine threonylcarbamoyltransferase">
    <location>
        <begin position="1"/>
        <end position="337"/>
    </location>
</feature>
<feature type="binding site" evidence="1">
    <location>
        <position position="111"/>
    </location>
    <ligand>
        <name>Fe cation</name>
        <dbReference type="ChEBI" id="CHEBI:24875"/>
    </ligand>
</feature>
<feature type="binding site" evidence="1">
    <location>
        <position position="115"/>
    </location>
    <ligand>
        <name>Fe cation</name>
        <dbReference type="ChEBI" id="CHEBI:24875"/>
    </ligand>
</feature>
<feature type="binding site" evidence="1">
    <location>
        <begin position="134"/>
        <end position="138"/>
    </location>
    <ligand>
        <name>substrate</name>
    </ligand>
</feature>
<feature type="binding site" evidence="1">
    <location>
        <position position="167"/>
    </location>
    <ligand>
        <name>substrate</name>
    </ligand>
</feature>
<feature type="binding site" evidence="1">
    <location>
        <position position="180"/>
    </location>
    <ligand>
        <name>substrate</name>
    </ligand>
</feature>
<feature type="binding site" evidence="1">
    <location>
        <position position="272"/>
    </location>
    <ligand>
        <name>substrate</name>
    </ligand>
</feature>
<feature type="binding site" evidence="1">
    <location>
        <position position="300"/>
    </location>
    <ligand>
        <name>Fe cation</name>
        <dbReference type="ChEBI" id="CHEBI:24875"/>
    </ligand>
</feature>
<sequence>MRVLGIETSCDETGIAIYDDEKGLLANQLYSQVKLHADYGGVVPELASRDHVRKTVPLIQAALKESGLTAKDIDAVAYTAGPGLVGALLVGATVGRSLAFAWNVPAIPVHHMEGHLLAPMLEDNPPEFPFVALLVSGGHTQLISVTGIGQYELLGESIDDAAGEAFDKTAKLLGLDYPGGPLLSKMAAQGTAGRFVFPRPMTDRPGLDFSFSGLKTFAANTIRDNGTDDQTRADIARAFEDAVVDTLMIKCKRALDQTGFKRLVMAGGVSANRTLRAKLAEMMKKRRGEVFYARPEFCTDNGAMIAYAGMVRFKAGATADLGVSVRPRWPLAELPAA</sequence>
<name>TSAD_SHIB3</name>